<reference key="1">
    <citation type="journal article" date="2010" name="BMC Genomics">
        <title>Complete genome sequence and lifestyle of black-pigmented Corynebacterium aurimucosum ATCC 700975 (formerly C. nigricans CN-1) isolated from a vaginal swab of a woman with spontaneous abortion.</title>
        <authorList>
            <person name="Trost E."/>
            <person name="Gotker S."/>
            <person name="Schneider J."/>
            <person name="Schneiker-Bekel S."/>
            <person name="Szczepanowski R."/>
            <person name="Tilker A."/>
            <person name="Viehoever P."/>
            <person name="Arnold W."/>
            <person name="Bekel T."/>
            <person name="Blom J."/>
            <person name="Gartemann K.H."/>
            <person name="Linke B."/>
            <person name="Goesmann A."/>
            <person name="Puhler A."/>
            <person name="Shukla S.K."/>
            <person name="Tauch A."/>
        </authorList>
    </citation>
    <scope>NUCLEOTIDE SEQUENCE [LARGE SCALE GENOMIC DNA]</scope>
    <source>
        <strain>ATCC 700975 / DSM 44827 / CIP 107346 / CN-1</strain>
    </source>
</reference>
<accession>C3PEY5</accession>
<dbReference type="EC" id="2.1.1.45" evidence="1"/>
<dbReference type="EMBL" id="CP001601">
    <property type="protein sequence ID" value="ACP32389.1"/>
    <property type="molecule type" value="Genomic_DNA"/>
</dbReference>
<dbReference type="RefSeq" id="WP_010187679.1">
    <property type="nucleotide sequence ID" value="NC_012590.1"/>
</dbReference>
<dbReference type="SMR" id="C3PEY5"/>
<dbReference type="STRING" id="548476.cauri_0792"/>
<dbReference type="GeneID" id="31923417"/>
<dbReference type="KEGG" id="car:cauri_0792"/>
<dbReference type="eggNOG" id="COG0207">
    <property type="taxonomic scope" value="Bacteria"/>
</dbReference>
<dbReference type="HOGENOM" id="CLU_021669_0_0_11"/>
<dbReference type="OrthoDB" id="9774633at2"/>
<dbReference type="UniPathway" id="UPA00575"/>
<dbReference type="Proteomes" id="UP000002077">
    <property type="component" value="Chromosome"/>
</dbReference>
<dbReference type="GO" id="GO:0005829">
    <property type="term" value="C:cytosol"/>
    <property type="evidence" value="ECO:0007669"/>
    <property type="project" value="TreeGrafter"/>
</dbReference>
<dbReference type="GO" id="GO:0004799">
    <property type="term" value="F:thymidylate synthase activity"/>
    <property type="evidence" value="ECO:0007669"/>
    <property type="project" value="UniProtKB-UniRule"/>
</dbReference>
<dbReference type="GO" id="GO:0006231">
    <property type="term" value="P:dTMP biosynthetic process"/>
    <property type="evidence" value="ECO:0007669"/>
    <property type="project" value="UniProtKB-UniRule"/>
</dbReference>
<dbReference type="GO" id="GO:0006235">
    <property type="term" value="P:dTTP biosynthetic process"/>
    <property type="evidence" value="ECO:0007669"/>
    <property type="project" value="UniProtKB-UniRule"/>
</dbReference>
<dbReference type="GO" id="GO:0032259">
    <property type="term" value="P:methylation"/>
    <property type="evidence" value="ECO:0007669"/>
    <property type="project" value="UniProtKB-KW"/>
</dbReference>
<dbReference type="CDD" id="cd00351">
    <property type="entry name" value="TS_Pyrimidine_HMase"/>
    <property type="match status" value="1"/>
</dbReference>
<dbReference type="FunFam" id="3.30.572.10:FF:000013">
    <property type="entry name" value="Thymidylate synthase"/>
    <property type="match status" value="1"/>
</dbReference>
<dbReference type="Gene3D" id="3.30.572.10">
    <property type="entry name" value="Thymidylate synthase/dCMP hydroxymethylase domain"/>
    <property type="match status" value="1"/>
</dbReference>
<dbReference type="HAMAP" id="MF_00008">
    <property type="entry name" value="Thymidy_synth_bact"/>
    <property type="match status" value="1"/>
</dbReference>
<dbReference type="InterPro" id="IPR045097">
    <property type="entry name" value="Thymidate_synth/dCMP_Mease"/>
</dbReference>
<dbReference type="InterPro" id="IPR023451">
    <property type="entry name" value="Thymidate_synth/dCMP_Mease_dom"/>
</dbReference>
<dbReference type="InterPro" id="IPR036926">
    <property type="entry name" value="Thymidate_synth/dCMP_Mease_sf"/>
</dbReference>
<dbReference type="InterPro" id="IPR000398">
    <property type="entry name" value="Thymidylate_synthase"/>
</dbReference>
<dbReference type="InterPro" id="IPR020940">
    <property type="entry name" value="Thymidylate_synthase_AS"/>
</dbReference>
<dbReference type="NCBIfam" id="NF002497">
    <property type="entry name" value="PRK01827.1-3"/>
    <property type="match status" value="1"/>
</dbReference>
<dbReference type="NCBIfam" id="NF002499">
    <property type="entry name" value="PRK01827.1-5"/>
    <property type="match status" value="1"/>
</dbReference>
<dbReference type="NCBIfam" id="TIGR03284">
    <property type="entry name" value="thym_sym"/>
    <property type="match status" value="2"/>
</dbReference>
<dbReference type="PANTHER" id="PTHR11548:SF9">
    <property type="entry name" value="THYMIDYLATE SYNTHASE"/>
    <property type="match status" value="1"/>
</dbReference>
<dbReference type="PANTHER" id="PTHR11548">
    <property type="entry name" value="THYMIDYLATE SYNTHASE 1"/>
    <property type="match status" value="1"/>
</dbReference>
<dbReference type="Pfam" id="PF00303">
    <property type="entry name" value="Thymidylat_synt"/>
    <property type="match status" value="1"/>
</dbReference>
<dbReference type="PRINTS" id="PR00108">
    <property type="entry name" value="THYMDSNTHASE"/>
</dbReference>
<dbReference type="SUPFAM" id="SSF55831">
    <property type="entry name" value="Thymidylate synthase/dCMP hydroxymethylase"/>
    <property type="match status" value="1"/>
</dbReference>
<dbReference type="PROSITE" id="PS00091">
    <property type="entry name" value="THYMIDYLATE_SYNTHASE"/>
    <property type="match status" value="1"/>
</dbReference>
<gene>
    <name evidence="1" type="primary">thyA</name>
    <name type="ordered locus">cauri_0792</name>
</gene>
<sequence>MATMIETPYEDLLRRVLEEGAPKGDRTGTGTLSLFGAQLRYNLAESFPLLTTKKVYFHGVIGELLWFLRGDSNVKWLQENKVRIWNEWADEDGELGPVYGVQWRSWPTPDGQHIDQIQVALDTLKNNPDSRRNLVSAWNVSELDKMALMPCHLLFQLYVADGKLSMQVYQRSADMFLGVPFNLASYAALTHMFAQQAGLEVGELIWTGGDCHIYNDHIEQVKEQLSRQPREYPQLKLHKAESLFDYDFDDFEVIGYDPHPTIKAQVSV</sequence>
<organism>
    <name type="scientific">Corynebacterium aurimucosum (strain ATCC 700975 / DSM 44827 / CIP 107346 / CN-1)</name>
    <name type="common">Corynebacterium nigricans</name>
    <dbReference type="NCBI Taxonomy" id="548476"/>
    <lineage>
        <taxon>Bacteria</taxon>
        <taxon>Bacillati</taxon>
        <taxon>Actinomycetota</taxon>
        <taxon>Actinomycetes</taxon>
        <taxon>Mycobacteriales</taxon>
        <taxon>Corynebacteriaceae</taxon>
        <taxon>Corynebacterium</taxon>
    </lineage>
</organism>
<proteinExistence type="inferred from homology"/>
<keyword id="KW-0963">Cytoplasm</keyword>
<keyword id="KW-0489">Methyltransferase</keyword>
<keyword id="KW-0545">Nucleotide biosynthesis</keyword>
<keyword id="KW-1185">Reference proteome</keyword>
<keyword id="KW-0808">Transferase</keyword>
<protein>
    <recommendedName>
        <fullName evidence="1">Thymidylate synthase</fullName>
        <shortName evidence="1">TS</shortName>
        <shortName evidence="1">TSase</shortName>
        <ecNumber evidence="1">2.1.1.45</ecNumber>
    </recommendedName>
</protein>
<feature type="chain" id="PRO_1000197239" description="Thymidylate synthase">
    <location>
        <begin position="1"/>
        <end position="268"/>
    </location>
</feature>
<feature type="active site" description="Nucleophile" evidence="1">
    <location>
        <position position="151"/>
    </location>
</feature>
<feature type="binding site" description="in other chain" evidence="1">
    <location>
        <position position="26"/>
    </location>
    <ligand>
        <name>dUMP</name>
        <dbReference type="ChEBI" id="CHEBI:246422"/>
        <note>ligand shared between dimeric partners</note>
    </ligand>
</feature>
<feature type="binding site" evidence="1">
    <location>
        <begin position="131"/>
        <end position="132"/>
    </location>
    <ligand>
        <name>dUMP</name>
        <dbReference type="ChEBI" id="CHEBI:246422"/>
        <note>ligand shared between dimeric partners</note>
    </ligand>
</feature>
<feature type="binding site" description="in other chain" evidence="1">
    <location>
        <begin position="171"/>
        <end position="174"/>
    </location>
    <ligand>
        <name>dUMP</name>
        <dbReference type="ChEBI" id="CHEBI:246422"/>
        <note>ligand shared between dimeric partners</note>
    </ligand>
</feature>
<feature type="binding site" evidence="1">
    <location>
        <position position="174"/>
    </location>
    <ligand>
        <name>(6R)-5,10-methylene-5,6,7,8-tetrahydrofolate</name>
        <dbReference type="ChEBI" id="CHEBI:15636"/>
    </ligand>
</feature>
<feature type="binding site" description="in other chain" evidence="1">
    <location>
        <position position="182"/>
    </location>
    <ligand>
        <name>dUMP</name>
        <dbReference type="ChEBI" id="CHEBI:246422"/>
        <note>ligand shared between dimeric partners</note>
    </ligand>
</feature>
<feature type="binding site" description="in other chain" evidence="1">
    <location>
        <begin position="212"/>
        <end position="214"/>
    </location>
    <ligand>
        <name>dUMP</name>
        <dbReference type="ChEBI" id="CHEBI:246422"/>
        <note>ligand shared between dimeric partners</note>
    </ligand>
</feature>
<feature type="binding site" evidence="1">
    <location>
        <position position="267"/>
    </location>
    <ligand>
        <name>(6R)-5,10-methylene-5,6,7,8-tetrahydrofolate</name>
        <dbReference type="ChEBI" id="CHEBI:15636"/>
    </ligand>
</feature>
<comment type="function">
    <text evidence="1">Catalyzes the reductive methylation of 2'-deoxyuridine-5'-monophosphate (dUMP) to 2'-deoxythymidine-5'-monophosphate (dTMP) while utilizing 5,10-methylenetetrahydrofolate (mTHF) as the methyl donor and reductant in the reaction, yielding dihydrofolate (DHF) as a by-product. This enzymatic reaction provides an intracellular de novo source of dTMP, an essential precursor for DNA biosynthesis.</text>
</comment>
<comment type="catalytic activity">
    <reaction evidence="1">
        <text>dUMP + (6R)-5,10-methylene-5,6,7,8-tetrahydrofolate = 7,8-dihydrofolate + dTMP</text>
        <dbReference type="Rhea" id="RHEA:12104"/>
        <dbReference type="ChEBI" id="CHEBI:15636"/>
        <dbReference type="ChEBI" id="CHEBI:57451"/>
        <dbReference type="ChEBI" id="CHEBI:63528"/>
        <dbReference type="ChEBI" id="CHEBI:246422"/>
        <dbReference type="EC" id="2.1.1.45"/>
    </reaction>
</comment>
<comment type="pathway">
    <text evidence="1">Pyrimidine metabolism; dTTP biosynthesis.</text>
</comment>
<comment type="subunit">
    <text evidence="1">Homodimer.</text>
</comment>
<comment type="subcellular location">
    <subcellularLocation>
        <location evidence="1">Cytoplasm</location>
    </subcellularLocation>
</comment>
<comment type="similarity">
    <text evidence="1">Belongs to the thymidylate synthase family. Bacterial-type ThyA subfamily.</text>
</comment>
<name>TYSY_CORA7</name>
<evidence type="ECO:0000255" key="1">
    <source>
        <dbReference type="HAMAP-Rule" id="MF_00008"/>
    </source>
</evidence>